<protein>
    <recommendedName>
        <fullName evidence="7">Complement C2</fullName>
    </recommendedName>
    <alternativeName>
        <fullName>C3/C5 convertase</fullName>
    </alternativeName>
    <component>
        <recommendedName>
            <fullName>Complement C2a</fullName>
        </recommendedName>
    </component>
    <component>
        <recommendedName>
            <fullName>Serine protease complement C2b</fullName>
            <ecNumber evidence="1">3.4.21.43</ecNumber>
        </recommendedName>
    </component>
</protein>
<name>CO2_MOUSE</name>
<dbReference type="EC" id="3.4.21.43" evidence="1"/>
<dbReference type="EMBL" id="M57891">
    <property type="protein sequence ID" value="AAA63294.1"/>
    <property type="molecule type" value="mRNA"/>
</dbReference>
<dbReference type="EMBL" id="M60579">
    <property type="protein sequence ID" value="AAA37380.1"/>
    <property type="molecule type" value="Genomic_DNA"/>
</dbReference>
<dbReference type="EMBL" id="M60563">
    <property type="protein sequence ID" value="AAA37380.1"/>
    <property type="status" value="JOINED"/>
    <property type="molecule type" value="Genomic_DNA"/>
</dbReference>
<dbReference type="EMBL" id="M60564">
    <property type="protein sequence ID" value="AAA37380.1"/>
    <property type="status" value="JOINED"/>
    <property type="molecule type" value="Genomic_DNA"/>
</dbReference>
<dbReference type="EMBL" id="M60565">
    <property type="protein sequence ID" value="AAA37380.1"/>
    <property type="status" value="JOINED"/>
    <property type="molecule type" value="Genomic_DNA"/>
</dbReference>
<dbReference type="EMBL" id="M60566">
    <property type="protein sequence ID" value="AAA37380.1"/>
    <property type="status" value="JOINED"/>
    <property type="molecule type" value="Genomic_DNA"/>
</dbReference>
<dbReference type="EMBL" id="M60567">
    <property type="protein sequence ID" value="AAA37380.1"/>
    <property type="status" value="JOINED"/>
    <property type="molecule type" value="Genomic_DNA"/>
</dbReference>
<dbReference type="EMBL" id="M60568">
    <property type="protein sequence ID" value="AAA37380.1"/>
    <property type="status" value="JOINED"/>
    <property type="molecule type" value="Genomic_DNA"/>
</dbReference>
<dbReference type="EMBL" id="M60569">
    <property type="protein sequence ID" value="AAA37380.1"/>
    <property type="status" value="JOINED"/>
    <property type="molecule type" value="Genomic_DNA"/>
</dbReference>
<dbReference type="EMBL" id="M60570">
    <property type="protein sequence ID" value="AAA37380.1"/>
    <property type="status" value="JOINED"/>
    <property type="molecule type" value="Genomic_DNA"/>
</dbReference>
<dbReference type="EMBL" id="M60571">
    <property type="protein sequence ID" value="AAA37380.1"/>
    <property type="status" value="JOINED"/>
    <property type="molecule type" value="Genomic_DNA"/>
</dbReference>
<dbReference type="EMBL" id="M60572">
    <property type="protein sequence ID" value="AAA37380.1"/>
    <property type="status" value="JOINED"/>
    <property type="molecule type" value="Genomic_DNA"/>
</dbReference>
<dbReference type="EMBL" id="M60573">
    <property type="protein sequence ID" value="AAA37380.1"/>
    <property type="status" value="JOINED"/>
    <property type="molecule type" value="Genomic_DNA"/>
</dbReference>
<dbReference type="EMBL" id="M60574">
    <property type="protein sequence ID" value="AAA37380.1"/>
    <property type="status" value="JOINED"/>
    <property type="molecule type" value="Genomic_DNA"/>
</dbReference>
<dbReference type="EMBL" id="M60575">
    <property type="protein sequence ID" value="AAA37380.1"/>
    <property type="status" value="JOINED"/>
    <property type="molecule type" value="Genomic_DNA"/>
</dbReference>
<dbReference type="EMBL" id="M60605">
    <property type="protein sequence ID" value="AAA37380.1"/>
    <property type="status" value="JOINED"/>
    <property type="molecule type" value="Genomic_DNA"/>
</dbReference>
<dbReference type="EMBL" id="M60576">
    <property type="protein sequence ID" value="AAA37380.1"/>
    <property type="status" value="JOINED"/>
    <property type="molecule type" value="Genomic_DNA"/>
</dbReference>
<dbReference type="EMBL" id="M60577">
    <property type="protein sequence ID" value="AAA37380.1"/>
    <property type="status" value="JOINED"/>
    <property type="molecule type" value="Genomic_DNA"/>
</dbReference>
<dbReference type="EMBL" id="M60578">
    <property type="protein sequence ID" value="AAA37380.1"/>
    <property type="status" value="JOINED"/>
    <property type="molecule type" value="Genomic_DNA"/>
</dbReference>
<dbReference type="EMBL" id="M60579">
    <property type="protein sequence ID" value="AAA37381.1"/>
    <property type="molecule type" value="Genomic_DNA"/>
</dbReference>
<dbReference type="EMBL" id="M60563">
    <property type="protein sequence ID" value="AAA37381.1"/>
    <property type="status" value="JOINED"/>
    <property type="molecule type" value="Genomic_DNA"/>
</dbReference>
<dbReference type="EMBL" id="M60564">
    <property type="protein sequence ID" value="AAA37381.1"/>
    <property type="status" value="JOINED"/>
    <property type="molecule type" value="Genomic_DNA"/>
</dbReference>
<dbReference type="EMBL" id="M60565">
    <property type="protein sequence ID" value="AAA37381.1"/>
    <property type="status" value="JOINED"/>
    <property type="molecule type" value="Genomic_DNA"/>
</dbReference>
<dbReference type="EMBL" id="M60566">
    <property type="protein sequence ID" value="AAA37381.1"/>
    <property type="status" value="JOINED"/>
    <property type="molecule type" value="Genomic_DNA"/>
</dbReference>
<dbReference type="EMBL" id="M60567">
    <property type="protein sequence ID" value="AAA37381.1"/>
    <property type="status" value="JOINED"/>
    <property type="molecule type" value="Genomic_DNA"/>
</dbReference>
<dbReference type="EMBL" id="M60568">
    <property type="protein sequence ID" value="AAA37381.1"/>
    <property type="status" value="JOINED"/>
    <property type="molecule type" value="Genomic_DNA"/>
</dbReference>
<dbReference type="EMBL" id="M60569">
    <property type="protein sequence ID" value="AAA37381.1"/>
    <property type="status" value="JOINED"/>
    <property type="molecule type" value="Genomic_DNA"/>
</dbReference>
<dbReference type="EMBL" id="M60570">
    <property type="protein sequence ID" value="AAA37381.1"/>
    <property type="status" value="JOINED"/>
    <property type="molecule type" value="Genomic_DNA"/>
</dbReference>
<dbReference type="EMBL" id="M60571">
    <property type="protein sequence ID" value="AAA37381.1"/>
    <property type="status" value="JOINED"/>
    <property type="molecule type" value="Genomic_DNA"/>
</dbReference>
<dbReference type="EMBL" id="M60572">
    <property type="protein sequence ID" value="AAA37381.1"/>
    <property type="status" value="JOINED"/>
    <property type="molecule type" value="Genomic_DNA"/>
</dbReference>
<dbReference type="EMBL" id="M60573">
    <property type="protein sequence ID" value="AAA37381.1"/>
    <property type="status" value="JOINED"/>
    <property type="molecule type" value="Genomic_DNA"/>
</dbReference>
<dbReference type="EMBL" id="M60574">
    <property type="protein sequence ID" value="AAA37381.1"/>
    <property type="status" value="JOINED"/>
    <property type="molecule type" value="Genomic_DNA"/>
</dbReference>
<dbReference type="EMBL" id="M60575">
    <property type="protein sequence ID" value="AAA37381.1"/>
    <property type="status" value="JOINED"/>
    <property type="molecule type" value="Genomic_DNA"/>
</dbReference>
<dbReference type="EMBL" id="M60605">
    <property type="protein sequence ID" value="AAA37381.1"/>
    <property type="status" value="JOINED"/>
    <property type="molecule type" value="Genomic_DNA"/>
</dbReference>
<dbReference type="EMBL" id="M60576">
    <property type="protein sequence ID" value="AAA37381.1"/>
    <property type="status" value="JOINED"/>
    <property type="molecule type" value="Genomic_DNA"/>
</dbReference>
<dbReference type="EMBL" id="M60577">
    <property type="protein sequence ID" value="AAA37381.1"/>
    <property type="status" value="JOINED"/>
    <property type="molecule type" value="Genomic_DNA"/>
</dbReference>
<dbReference type="EMBL" id="M60578">
    <property type="protein sequence ID" value="AAA37381.1"/>
    <property type="status" value="JOINED"/>
    <property type="molecule type" value="Genomic_DNA"/>
</dbReference>
<dbReference type="EMBL" id="AK146812">
    <property type="protein sequence ID" value="BAE27452.1"/>
    <property type="molecule type" value="mRNA"/>
</dbReference>
<dbReference type="EMBL" id="AF109906">
    <property type="protein sequence ID" value="AAC84162.1"/>
    <property type="molecule type" value="Genomic_DNA"/>
</dbReference>
<dbReference type="EMBL" id="CT025759">
    <property type="status" value="NOT_ANNOTATED_CDS"/>
    <property type="molecule type" value="Genomic_DNA"/>
</dbReference>
<dbReference type="EMBL" id="CH466666">
    <property type="protein sequence ID" value="EDL26734.1"/>
    <property type="molecule type" value="Genomic_DNA"/>
</dbReference>
<dbReference type="EMBL" id="BC011086">
    <property type="protein sequence ID" value="AAH11086.1"/>
    <property type="molecule type" value="mRNA"/>
</dbReference>
<dbReference type="CCDS" id="CCDS28664.1">
    <molecule id="P21180-1"/>
</dbReference>
<dbReference type="PIR" id="A38876">
    <property type="entry name" value="C2MS"/>
</dbReference>
<dbReference type="RefSeq" id="NP_038512.2">
    <molecule id="P21180-1"/>
    <property type="nucleotide sequence ID" value="NM_013484.3"/>
</dbReference>
<dbReference type="SMR" id="P21180"/>
<dbReference type="ComplexPortal" id="CPX-6198">
    <property type="entry name" value="Classical and lectin pathway C3 convertase complex C4b2a-B"/>
</dbReference>
<dbReference type="FunCoup" id="P21180">
    <property type="interactions" value="110"/>
</dbReference>
<dbReference type="IntAct" id="P21180">
    <property type="interactions" value="1"/>
</dbReference>
<dbReference type="MINT" id="P21180"/>
<dbReference type="STRING" id="10090.ENSMUSP00000025230"/>
<dbReference type="MEROPS" id="S01.194"/>
<dbReference type="GlyCosmos" id="P21180">
    <property type="glycosylation" value="8 sites, No reported glycans"/>
</dbReference>
<dbReference type="GlyGen" id="P21180">
    <property type="glycosylation" value="8 sites, 2 N-linked glycans (2 sites)"/>
</dbReference>
<dbReference type="iPTMnet" id="P21180"/>
<dbReference type="PhosphoSitePlus" id="P21180"/>
<dbReference type="CPTAC" id="non-CPTAC-3777"/>
<dbReference type="CPTAC" id="non-CPTAC-5589"/>
<dbReference type="PaxDb" id="10090-ENSMUSP00000025230"/>
<dbReference type="PeptideAtlas" id="P21180"/>
<dbReference type="ProteomicsDB" id="283593">
    <molecule id="P21180-1"/>
</dbReference>
<dbReference type="ProteomicsDB" id="283594">
    <molecule id="P21180-2"/>
</dbReference>
<dbReference type="Antibodypedia" id="7528">
    <property type="antibodies" value="552 antibodies from 34 providers"/>
</dbReference>
<dbReference type="DNASU" id="12263"/>
<dbReference type="Ensembl" id="ENSMUST00000025230.15">
    <molecule id="P21180-1"/>
    <property type="protein sequence ID" value="ENSMUSP00000025230.9"/>
    <property type="gene ID" value="ENSMUSG00000024371.15"/>
</dbReference>
<dbReference type="GeneID" id="12263"/>
<dbReference type="KEGG" id="mmu:12263"/>
<dbReference type="UCSC" id="uc008cdz.2">
    <molecule id="P21180-1"/>
    <property type="organism name" value="mouse"/>
</dbReference>
<dbReference type="AGR" id="MGI:88226"/>
<dbReference type="CTD" id="717"/>
<dbReference type="MGI" id="MGI:88226">
    <property type="gene designation" value="C2"/>
</dbReference>
<dbReference type="VEuPathDB" id="HostDB:ENSMUSG00000024371"/>
<dbReference type="eggNOG" id="KOG3627">
    <property type="taxonomic scope" value="Eukaryota"/>
</dbReference>
<dbReference type="GeneTree" id="ENSGT00940000162934"/>
<dbReference type="HOGENOM" id="CLU_022004_1_0_1"/>
<dbReference type="InParanoid" id="P21180"/>
<dbReference type="OMA" id="YTKPWHV"/>
<dbReference type="OrthoDB" id="6127264at2759"/>
<dbReference type="PhylomeDB" id="P21180"/>
<dbReference type="TreeFam" id="TF330194"/>
<dbReference type="Reactome" id="R-MMU-166663">
    <property type="pathway name" value="Initial triggering of complement"/>
</dbReference>
<dbReference type="Reactome" id="R-MMU-174577">
    <property type="pathway name" value="Activation of C3 and C5"/>
</dbReference>
<dbReference type="Reactome" id="R-MMU-977606">
    <property type="pathway name" value="Regulation of Complement cascade"/>
</dbReference>
<dbReference type="BioGRID-ORCS" id="12263">
    <property type="hits" value="1 hit in 83 CRISPR screens"/>
</dbReference>
<dbReference type="ChiTaRS" id="C2">
    <property type="organism name" value="mouse"/>
</dbReference>
<dbReference type="PRO" id="PR:P21180"/>
<dbReference type="Proteomes" id="UP000000589">
    <property type="component" value="Chromosome 17"/>
</dbReference>
<dbReference type="RNAct" id="P21180">
    <property type="molecule type" value="protein"/>
</dbReference>
<dbReference type="Bgee" id="ENSMUSG00000024371">
    <property type="expression patterns" value="Expressed in iris and 162 other cell types or tissues"/>
</dbReference>
<dbReference type="ExpressionAtlas" id="P21180">
    <property type="expression patterns" value="baseline and differential"/>
</dbReference>
<dbReference type="GO" id="GO:0005615">
    <property type="term" value="C:extracellular space"/>
    <property type="evidence" value="ECO:0007005"/>
    <property type="project" value="BHF-UCL"/>
</dbReference>
<dbReference type="GO" id="GO:0046872">
    <property type="term" value="F:metal ion binding"/>
    <property type="evidence" value="ECO:0007669"/>
    <property type="project" value="UniProtKB-KW"/>
</dbReference>
<dbReference type="GO" id="GO:0004252">
    <property type="term" value="F:serine-type endopeptidase activity"/>
    <property type="evidence" value="ECO:0007669"/>
    <property type="project" value="UniProtKB-EC"/>
</dbReference>
<dbReference type="GO" id="GO:0006958">
    <property type="term" value="P:complement activation, classical pathway"/>
    <property type="evidence" value="ECO:0007669"/>
    <property type="project" value="UniProtKB-KW"/>
</dbReference>
<dbReference type="GO" id="GO:0045087">
    <property type="term" value="P:innate immune response"/>
    <property type="evidence" value="ECO:0007669"/>
    <property type="project" value="UniProtKB-KW"/>
</dbReference>
<dbReference type="GO" id="GO:2000427">
    <property type="term" value="P:positive regulation of apoptotic cell clearance"/>
    <property type="evidence" value="ECO:0007669"/>
    <property type="project" value="Ensembl"/>
</dbReference>
<dbReference type="GO" id="GO:0006508">
    <property type="term" value="P:proteolysis"/>
    <property type="evidence" value="ECO:0007669"/>
    <property type="project" value="UniProtKB-KW"/>
</dbReference>
<dbReference type="GO" id="GO:0032496">
    <property type="term" value="P:response to lipopolysaccharide"/>
    <property type="evidence" value="ECO:0007669"/>
    <property type="project" value="Ensembl"/>
</dbReference>
<dbReference type="GO" id="GO:0007584">
    <property type="term" value="P:response to nutrient"/>
    <property type="evidence" value="ECO:0007669"/>
    <property type="project" value="Ensembl"/>
</dbReference>
<dbReference type="GO" id="GO:0097066">
    <property type="term" value="P:response to thyroid hormone"/>
    <property type="evidence" value="ECO:0007669"/>
    <property type="project" value="Ensembl"/>
</dbReference>
<dbReference type="CDD" id="cd00033">
    <property type="entry name" value="CCP"/>
    <property type="match status" value="2"/>
</dbReference>
<dbReference type="CDD" id="cd00190">
    <property type="entry name" value="Tryp_SPc"/>
    <property type="match status" value="1"/>
</dbReference>
<dbReference type="FunFam" id="2.40.10.10:FF:000051">
    <property type="entry name" value="complement C2 isoform X1"/>
    <property type="match status" value="1"/>
</dbReference>
<dbReference type="FunFam" id="2.10.70.10:FF:000052">
    <property type="entry name" value="Complement factor B"/>
    <property type="match status" value="1"/>
</dbReference>
<dbReference type="FunFam" id="2.10.70.10:FF:000019">
    <property type="entry name" value="Complement factor b,-like"/>
    <property type="match status" value="2"/>
</dbReference>
<dbReference type="FunFam" id="2.40.10.10:FF:000046">
    <property type="entry name" value="Complement factor b,-like"/>
    <property type="match status" value="1"/>
</dbReference>
<dbReference type="Gene3D" id="2.10.70.10">
    <property type="entry name" value="Complement Module, domain 1"/>
    <property type="match status" value="3"/>
</dbReference>
<dbReference type="Gene3D" id="2.40.10.10">
    <property type="entry name" value="Trypsin-like serine proteases"/>
    <property type="match status" value="2"/>
</dbReference>
<dbReference type="Gene3D" id="3.40.50.410">
    <property type="entry name" value="von Willebrand factor, type A domain"/>
    <property type="match status" value="1"/>
</dbReference>
<dbReference type="InterPro" id="IPR011360">
    <property type="entry name" value="Compl_C2_B"/>
</dbReference>
<dbReference type="InterPro" id="IPR009003">
    <property type="entry name" value="Peptidase_S1_PA"/>
</dbReference>
<dbReference type="InterPro" id="IPR043504">
    <property type="entry name" value="Peptidase_S1_PA_chymotrypsin"/>
</dbReference>
<dbReference type="InterPro" id="IPR001314">
    <property type="entry name" value="Peptidase_S1A"/>
</dbReference>
<dbReference type="InterPro" id="IPR035976">
    <property type="entry name" value="Sushi/SCR/CCP_sf"/>
</dbReference>
<dbReference type="InterPro" id="IPR000436">
    <property type="entry name" value="Sushi_SCR_CCP_dom"/>
</dbReference>
<dbReference type="InterPro" id="IPR001254">
    <property type="entry name" value="Trypsin_dom"/>
</dbReference>
<dbReference type="InterPro" id="IPR018114">
    <property type="entry name" value="TRYPSIN_HIS"/>
</dbReference>
<dbReference type="InterPro" id="IPR033116">
    <property type="entry name" value="TRYPSIN_SER"/>
</dbReference>
<dbReference type="InterPro" id="IPR002035">
    <property type="entry name" value="VWF_A"/>
</dbReference>
<dbReference type="InterPro" id="IPR036465">
    <property type="entry name" value="vWFA_dom_sf"/>
</dbReference>
<dbReference type="PANTHER" id="PTHR46393:SF2">
    <property type="entry name" value="COMPLEMENT C2"/>
    <property type="match status" value="1"/>
</dbReference>
<dbReference type="PANTHER" id="PTHR46393">
    <property type="entry name" value="SUSHI DOMAIN-CONTAINING PROTEIN"/>
    <property type="match status" value="1"/>
</dbReference>
<dbReference type="Pfam" id="PF00084">
    <property type="entry name" value="Sushi"/>
    <property type="match status" value="2"/>
</dbReference>
<dbReference type="Pfam" id="PF00089">
    <property type="entry name" value="Trypsin"/>
    <property type="match status" value="1"/>
</dbReference>
<dbReference type="Pfam" id="PF00092">
    <property type="entry name" value="VWA"/>
    <property type="match status" value="1"/>
</dbReference>
<dbReference type="PIRSF" id="PIRSF001154">
    <property type="entry name" value="Compl_C2_B"/>
    <property type="match status" value="1"/>
</dbReference>
<dbReference type="PRINTS" id="PR00722">
    <property type="entry name" value="CHYMOTRYPSIN"/>
</dbReference>
<dbReference type="SMART" id="SM00032">
    <property type="entry name" value="CCP"/>
    <property type="match status" value="2"/>
</dbReference>
<dbReference type="SMART" id="SM00020">
    <property type="entry name" value="Tryp_SPc"/>
    <property type="match status" value="1"/>
</dbReference>
<dbReference type="SMART" id="SM00327">
    <property type="entry name" value="VWA"/>
    <property type="match status" value="1"/>
</dbReference>
<dbReference type="SUPFAM" id="SSF57535">
    <property type="entry name" value="Complement control module/SCR domain"/>
    <property type="match status" value="3"/>
</dbReference>
<dbReference type="SUPFAM" id="SSF50494">
    <property type="entry name" value="Trypsin-like serine proteases"/>
    <property type="match status" value="1"/>
</dbReference>
<dbReference type="SUPFAM" id="SSF53300">
    <property type="entry name" value="vWA-like"/>
    <property type="match status" value="1"/>
</dbReference>
<dbReference type="PROSITE" id="PS50923">
    <property type="entry name" value="SUSHI"/>
    <property type="match status" value="3"/>
</dbReference>
<dbReference type="PROSITE" id="PS50240">
    <property type="entry name" value="TRYPSIN_DOM"/>
    <property type="match status" value="1"/>
</dbReference>
<dbReference type="PROSITE" id="PS00134">
    <property type="entry name" value="TRYPSIN_HIS"/>
    <property type="match status" value="1"/>
</dbReference>
<dbReference type="PROSITE" id="PS00135">
    <property type="entry name" value="TRYPSIN_SER"/>
    <property type="match status" value="1"/>
</dbReference>
<dbReference type="PROSITE" id="PS50234">
    <property type="entry name" value="VWFA"/>
    <property type="match status" value="1"/>
</dbReference>
<accession>P21180</accession>
<accession>O70350</accession>
<evidence type="ECO:0000250" key="1">
    <source>
        <dbReference type="UniProtKB" id="P06681"/>
    </source>
</evidence>
<evidence type="ECO:0000255" key="2"/>
<evidence type="ECO:0000255" key="3">
    <source>
        <dbReference type="PROSITE-ProRule" id="PRU00219"/>
    </source>
</evidence>
<evidence type="ECO:0000255" key="4">
    <source>
        <dbReference type="PROSITE-ProRule" id="PRU00274"/>
    </source>
</evidence>
<evidence type="ECO:0000255" key="5">
    <source>
        <dbReference type="PROSITE-ProRule" id="PRU00302"/>
    </source>
</evidence>
<evidence type="ECO:0000303" key="6">
    <source>
    </source>
</evidence>
<evidence type="ECO:0000305" key="7"/>
<evidence type="ECO:0000312" key="8">
    <source>
        <dbReference type="MGI" id="MGI:88226"/>
    </source>
</evidence>
<organism>
    <name type="scientific">Mus musculus</name>
    <name type="common">Mouse</name>
    <dbReference type="NCBI Taxonomy" id="10090"/>
    <lineage>
        <taxon>Eukaryota</taxon>
        <taxon>Metazoa</taxon>
        <taxon>Chordata</taxon>
        <taxon>Craniata</taxon>
        <taxon>Vertebrata</taxon>
        <taxon>Euteleostomi</taxon>
        <taxon>Mammalia</taxon>
        <taxon>Eutheria</taxon>
        <taxon>Euarchontoglires</taxon>
        <taxon>Glires</taxon>
        <taxon>Rodentia</taxon>
        <taxon>Myomorpha</taxon>
        <taxon>Muroidea</taxon>
        <taxon>Muridae</taxon>
        <taxon>Murinae</taxon>
        <taxon>Mus</taxon>
        <taxon>Mus</taxon>
    </lineage>
</organism>
<keyword id="KW-0025">Alternative splicing</keyword>
<keyword id="KW-0180">Complement pathway</keyword>
<keyword id="KW-1015">Disulfide bond</keyword>
<keyword id="KW-0325">Glycoprotein</keyword>
<keyword id="KW-0378">Hydrolase</keyword>
<keyword id="KW-0391">Immunity</keyword>
<keyword id="KW-0399">Innate immunity</keyword>
<keyword id="KW-0460">Magnesium</keyword>
<keyword id="KW-0464">Manganese</keyword>
<keyword id="KW-0479">Metal-binding</keyword>
<keyword id="KW-0645">Protease</keyword>
<keyword id="KW-1185">Reference proteome</keyword>
<keyword id="KW-0677">Repeat</keyword>
<keyword id="KW-0964">Secreted</keyword>
<keyword id="KW-0720">Serine protease</keyword>
<keyword id="KW-0732">Signal</keyword>
<keyword id="KW-0768">Sushi</keyword>
<proteinExistence type="evidence at protein level"/>
<comment type="function">
    <text evidence="1">Precursor of the catalytic component of the C3 and C5 convertase complexes, which are part of the complement pathway, a cascade of proteins that leads to phagocytosis and breakdown of pathogens and signaling that strengthens the adaptive immune system. Component C2 is part of the classical, lectin and GZMK complement systems.</text>
</comment>
<comment type="function">
    <molecule>Serine protease complement C2b</molecule>
    <text evidence="1">Catalytic component of the complement C3 and C5 convertase complexes. Following complement activation, recruited to the surface of pathogens by complement C4b opsonin to form the C3 convertase, or C3b and C4b opsonins to form the C5 convertase. As part of the C3 convertase, cleaves and activate C3 into C3a anaphylatoxin and C3b opsonin, the next components of the complement pathways. As part of the C5 convertase, cleaves and activate C5 into C5a anaphylatoxin and C5b component of the membrane attack complex.</text>
</comment>
<comment type="catalytic activity">
    <molecule>Serine protease complement C2b</molecule>
    <reaction evidence="1">
        <text>Selective cleavage of Arg-|-Ser bond in complement component C3 alpha-chain to form C3a and C3b, and Arg-|-Xaa bond in complement component C5 alpha-chain to form C5a and C5b.</text>
        <dbReference type="EC" id="3.4.21.43"/>
    </reaction>
</comment>
<comment type="cofactor">
    <cofactor evidence="1">
        <name>Mg(2+)</name>
        <dbReference type="ChEBI" id="CHEBI:18420"/>
    </cofactor>
    <cofactor evidence="1">
        <name>Mn(2+)</name>
        <dbReference type="ChEBI" id="CHEBI:29035"/>
    </cofactor>
</comment>
<comment type="subunit">
    <molecule>Serine protease complement C2b</molecule>
    <text evidence="1">Serine protease component of the C3 convertase, also named C4bC2b, composed of the serine protease complement C2b and complement C4b. Serine protease component of the C5 convertase, also named C4bC2bC3b, composed of the serine protease complement C2b, complement C3b, as well as complement C4b.</text>
</comment>
<comment type="subcellular location">
    <subcellularLocation>
        <location evidence="1">Secreted</location>
    </subcellularLocation>
    <subcellularLocation>
        <location evidence="1">Cell surface</location>
    </subcellularLocation>
    <text evidence="1">Recruited to the surface of pathogens by complement C3b and complement C4b opsonins.</text>
</comment>
<comment type="alternative products">
    <event type="alternative splicing"/>
    <isoform>
        <id>P21180-1</id>
        <name>Long</name>
        <sequence type="displayed"/>
    </isoform>
    <isoform>
        <id>P21180-2</id>
        <name>Short</name>
        <sequence type="described" ref="VSP_005385"/>
    </isoform>
</comment>
<comment type="domain">
    <text evidence="1">The MIDAS-like motif in the VWFA domain binds divalent metal cations.</text>
</comment>
<comment type="PTM">
    <text evidence="1">Cleaved and activated by different proteases depending on the complement pathway to generate complement C2a and serine protease complement C2b chains. Cleaved and activated by C1S following activation by the classical complement system. Cleaved and activated by MASP2 following activation by the lectin complement system. Cleaved and activated by GZMK following activation by the GZMK complement system.</text>
</comment>
<comment type="similarity">
    <text evidence="4">Belongs to the peptidase S1 family.</text>
</comment>
<comment type="caution">
    <text evidence="7">Historically, the serine protease complement C2b, which constitutes the larger catalytic fragment, was named C2a. It was later renamed C2b, a nomenclature widely accepted now.</text>
</comment>
<feature type="signal peptide" evidence="1">
    <location>
        <begin position="1"/>
        <end position="18"/>
    </location>
</feature>
<feature type="chain" id="PRO_0000027613" description="Complement C2">
    <location>
        <begin position="19"/>
        <end position="760"/>
    </location>
</feature>
<feature type="chain" id="PRO_0000027614" description="Complement C2a" evidence="1">
    <location>
        <begin position="19"/>
        <end position="250"/>
    </location>
</feature>
<feature type="chain" id="PRO_0000027615" description="Serine protease complement C2b" evidence="1">
    <location>
        <begin position="251"/>
        <end position="760"/>
    </location>
</feature>
<feature type="domain" description="Sushi 1" evidence="5">
    <location>
        <begin position="20"/>
        <end position="90"/>
    </location>
</feature>
<feature type="domain" description="Sushi 2" evidence="5">
    <location>
        <begin position="92"/>
        <end position="151"/>
    </location>
</feature>
<feature type="domain" description="Sushi 3" evidence="5">
    <location>
        <begin position="154"/>
        <end position="212"/>
    </location>
</feature>
<feature type="domain" description="VWFA" evidence="3">
    <location>
        <begin position="261"/>
        <end position="459"/>
    </location>
</feature>
<feature type="domain" description="Peptidase S1" evidence="4">
    <location>
        <begin position="471"/>
        <end position="752"/>
    </location>
</feature>
<feature type="short sequence motif" description="MIDAS-like motif" evidence="1">
    <location>
        <begin position="267"/>
        <end position="271"/>
    </location>
</feature>
<feature type="active site" description="Charge relay system" evidence="1">
    <location>
        <position position="514"/>
    </location>
</feature>
<feature type="active site" description="Charge relay system" evidence="1">
    <location>
        <position position="570"/>
    </location>
</feature>
<feature type="active site" description="Charge relay system" evidence="1">
    <location>
        <position position="689"/>
    </location>
</feature>
<feature type="binding site" evidence="1">
    <location>
        <position position="269"/>
    </location>
    <ligand>
        <name>Mg(2+)</name>
        <dbReference type="ChEBI" id="CHEBI:18420"/>
    </ligand>
</feature>
<feature type="binding site" evidence="1">
    <location>
        <position position="271"/>
    </location>
    <ligand>
        <name>Mg(2+)</name>
        <dbReference type="ChEBI" id="CHEBI:18420"/>
    </ligand>
</feature>
<feature type="binding site" evidence="1">
    <location>
        <position position="344"/>
    </location>
    <ligand>
        <name>Mg(2+)</name>
        <dbReference type="ChEBI" id="CHEBI:18420"/>
    </ligand>
</feature>
<feature type="site" description="Cleavage; by C1S, MASP2 and GZMK" evidence="1">
    <location>
        <begin position="250"/>
        <end position="251"/>
    </location>
</feature>
<feature type="glycosylation site" description="N-linked (GlcNAc...) asparagine" evidence="2">
    <location>
        <position position="27"/>
    </location>
</feature>
<feature type="glycosylation site" description="N-linked (GlcNAc...) asparagine" evidence="2">
    <location>
        <position position="32"/>
    </location>
</feature>
<feature type="glycosylation site" description="N-linked (GlcNAc...) asparagine" evidence="2">
    <location>
        <position position="117"/>
    </location>
</feature>
<feature type="glycosylation site" description="N-linked (GlcNAc...) asparagine" evidence="2">
    <location>
        <position position="297"/>
    </location>
</feature>
<feature type="glycosylation site" description="N-linked (GlcNAc...) asparagine" evidence="2">
    <location>
        <position position="340"/>
    </location>
</feature>
<feature type="glycosylation site" description="N-linked (GlcNAc...) asparagine" evidence="2">
    <location>
        <position position="474"/>
    </location>
</feature>
<feature type="glycosylation site" description="N-linked (GlcNAc...) asparagine" evidence="2">
    <location>
        <position position="478"/>
    </location>
</feature>
<feature type="glycosylation site" description="N-linked (GlcNAc...) asparagine" evidence="2">
    <location>
        <position position="663"/>
    </location>
</feature>
<feature type="disulfide bond" evidence="1">
    <location>
        <begin position="22"/>
        <end position="62"/>
    </location>
</feature>
<feature type="disulfide bond" evidence="1">
    <location>
        <begin position="49"/>
        <end position="89"/>
    </location>
</feature>
<feature type="disulfide bond" evidence="1">
    <location>
        <begin position="94"/>
        <end position="136"/>
    </location>
</feature>
<feature type="disulfide bond" evidence="1">
    <location>
        <begin position="122"/>
        <end position="149"/>
    </location>
</feature>
<feature type="disulfide bond" evidence="1">
    <location>
        <begin position="156"/>
        <end position="197"/>
    </location>
</feature>
<feature type="disulfide bond" evidence="1">
    <location>
        <begin position="182"/>
        <end position="210"/>
    </location>
</feature>
<feature type="disulfide bond" evidence="1">
    <location>
        <begin position="470"/>
        <end position="590"/>
    </location>
</feature>
<feature type="disulfide bond" evidence="1">
    <location>
        <begin position="499"/>
        <end position="515"/>
    </location>
</feature>
<feature type="disulfide bond" evidence="1">
    <location>
        <begin position="593"/>
        <end position="609"/>
    </location>
</feature>
<feature type="disulfide bond" evidence="1">
    <location>
        <begin position="647"/>
        <end position="674"/>
    </location>
</feature>
<feature type="disulfide bond" evidence="1">
    <location>
        <begin position="685"/>
        <end position="715"/>
    </location>
</feature>
<feature type="splice variant" id="VSP_005385" description="In isoform Short." evidence="6">
    <location>
        <begin position="606"/>
        <end position="612"/>
    </location>
</feature>
<feature type="sequence conflict" description="In Ref. 1; AAA37380/AAA37381/AAA63294." evidence="7" ref="1">
    <original>EQ</original>
    <variation>DE</variation>
    <location>
        <begin position="123"/>
        <end position="124"/>
    </location>
</feature>
<feature type="sequence conflict" description="In Ref. 1; AAA37380/AAA37381/AAA63294." evidence="7" ref="1">
    <original>S</original>
    <variation>T</variation>
    <location>
        <position position="299"/>
    </location>
</feature>
<feature type="sequence conflict" description="In Ref. 1; AAA37380/AAA37381/AAA63294." evidence="7" ref="1">
    <original>T</original>
    <variation>A</variation>
    <location>
        <position position="344"/>
    </location>
</feature>
<feature type="sequence conflict" description="In Ref. 1; AAA37380/AAA37381/AAA63294." evidence="7" ref="1">
    <original>S</original>
    <variation>T</variation>
    <location>
        <position position="359"/>
    </location>
</feature>
<reference key="1">
    <citation type="journal article" date="1990" name="J. Biol. Chem.">
        <title>Murine complement C2 and factor B genomic and cDNA cloning reveals different mechanisms for multiple transcripts of C2 and B.</title>
        <authorList>
            <person name="Ishikawa N."/>
            <person name="Nonaka M."/>
            <person name="Wetsel R.A."/>
            <person name="Colten H.R."/>
        </authorList>
    </citation>
    <scope>NUCLEOTIDE SEQUENCE [GENOMIC DNA / MRNA] (ISOFORMS LONG AND SHORT)</scope>
</reference>
<reference key="2">
    <citation type="journal article" date="2005" name="Science">
        <title>The transcriptional landscape of the mammalian genome.</title>
        <authorList>
            <person name="Carninci P."/>
            <person name="Kasukawa T."/>
            <person name="Katayama S."/>
            <person name="Gough J."/>
            <person name="Frith M.C."/>
            <person name="Maeda N."/>
            <person name="Oyama R."/>
            <person name="Ravasi T."/>
            <person name="Lenhard B."/>
            <person name="Wells C."/>
            <person name="Kodzius R."/>
            <person name="Shimokawa K."/>
            <person name="Bajic V.B."/>
            <person name="Brenner S.E."/>
            <person name="Batalov S."/>
            <person name="Forrest A.R."/>
            <person name="Zavolan M."/>
            <person name="Davis M.J."/>
            <person name="Wilming L.G."/>
            <person name="Aidinis V."/>
            <person name="Allen J.E."/>
            <person name="Ambesi-Impiombato A."/>
            <person name="Apweiler R."/>
            <person name="Aturaliya R.N."/>
            <person name="Bailey T.L."/>
            <person name="Bansal M."/>
            <person name="Baxter L."/>
            <person name="Beisel K.W."/>
            <person name="Bersano T."/>
            <person name="Bono H."/>
            <person name="Chalk A.M."/>
            <person name="Chiu K.P."/>
            <person name="Choudhary V."/>
            <person name="Christoffels A."/>
            <person name="Clutterbuck D.R."/>
            <person name="Crowe M.L."/>
            <person name="Dalla E."/>
            <person name="Dalrymple B.P."/>
            <person name="de Bono B."/>
            <person name="Della Gatta G."/>
            <person name="di Bernardo D."/>
            <person name="Down T."/>
            <person name="Engstrom P."/>
            <person name="Fagiolini M."/>
            <person name="Faulkner G."/>
            <person name="Fletcher C.F."/>
            <person name="Fukushima T."/>
            <person name="Furuno M."/>
            <person name="Futaki S."/>
            <person name="Gariboldi M."/>
            <person name="Georgii-Hemming P."/>
            <person name="Gingeras T.R."/>
            <person name="Gojobori T."/>
            <person name="Green R.E."/>
            <person name="Gustincich S."/>
            <person name="Harbers M."/>
            <person name="Hayashi Y."/>
            <person name="Hensch T.K."/>
            <person name="Hirokawa N."/>
            <person name="Hill D."/>
            <person name="Huminiecki L."/>
            <person name="Iacono M."/>
            <person name="Ikeo K."/>
            <person name="Iwama A."/>
            <person name="Ishikawa T."/>
            <person name="Jakt M."/>
            <person name="Kanapin A."/>
            <person name="Katoh M."/>
            <person name="Kawasawa Y."/>
            <person name="Kelso J."/>
            <person name="Kitamura H."/>
            <person name="Kitano H."/>
            <person name="Kollias G."/>
            <person name="Krishnan S.P."/>
            <person name="Kruger A."/>
            <person name="Kummerfeld S.K."/>
            <person name="Kurochkin I.V."/>
            <person name="Lareau L.F."/>
            <person name="Lazarevic D."/>
            <person name="Lipovich L."/>
            <person name="Liu J."/>
            <person name="Liuni S."/>
            <person name="McWilliam S."/>
            <person name="Madan Babu M."/>
            <person name="Madera M."/>
            <person name="Marchionni L."/>
            <person name="Matsuda H."/>
            <person name="Matsuzawa S."/>
            <person name="Miki H."/>
            <person name="Mignone F."/>
            <person name="Miyake S."/>
            <person name="Morris K."/>
            <person name="Mottagui-Tabar S."/>
            <person name="Mulder N."/>
            <person name="Nakano N."/>
            <person name="Nakauchi H."/>
            <person name="Ng P."/>
            <person name="Nilsson R."/>
            <person name="Nishiguchi S."/>
            <person name="Nishikawa S."/>
            <person name="Nori F."/>
            <person name="Ohara O."/>
            <person name="Okazaki Y."/>
            <person name="Orlando V."/>
            <person name="Pang K.C."/>
            <person name="Pavan W.J."/>
            <person name="Pavesi G."/>
            <person name="Pesole G."/>
            <person name="Petrovsky N."/>
            <person name="Piazza S."/>
            <person name="Reed J."/>
            <person name="Reid J.F."/>
            <person name="Ring B.Z."/>
            <person name="Ringwald M."/>
            <person name="Rost B."/>
            <person name="Ruan Y."/>
            <person name="Salzberg S.L."/>
            <person name="Sandelin A."/>
            <person name="Schneider C."/>
            <person name="Schoenbach C."/>
            <person name="Sekiguchi K."/>
            <person name="Semple C.A."/>
            <person name="Seno S."/>
            <person name="Sessa L."/>
            <person name="Sheng Y."/>
            <person name="Shibata Y."/>
            <person name="Shimada H."/>
            <person name="Shimada K."/>
            <person name="Silva D."/>
            <person name="Sinclair B."/>
            <person name="Sperling S."/>
            <person name="Stupka E."/>
            <person name="Sugiura K."/>
            <person name="Sultana R."/>
            <person name="Takenaka Y."/>
            <person name="Taki K."/>
            <person name="Tammoja K."/>
            <person name="Tan S.L."/>
            <person name="Tang S."/>
            <person name="Taylor M.S."/>
            <person name="Tegner J."/>
            <person name="Teichmann S.A."/>
            <person name="Ueda H.R."/>
            <person name="van Nimwegen E."/>
            <person name="Verardo R."/>
            <person name="Wei C.L."/>
            <person name="Yagi K."/>
            <person name="Yamanishi H."/>
            <person name="Zabarovsky E."/>
            <person name="Zhu S."/>
            <person name="Zimmer A."/>
            <person name="Hide W."/>
            <person name="Bult C."/>
            <person name="Grimmond S.M."/>
            <person name="Teasdale R.D."/>
            <person name="Liu E.T."/>
            <person name="Brusic V."/>
            <person name="Quackenbush J."/>
            <person name="Wahlestedt C."/>
            <person name="Mattick J.S."/>
            <person name="Hume D.A."/>
            <person name="Kai C."/>
            <person name="Sasaki D."/>
            <person name="Tomaru Y."/>
            <person name="Fukuda S."/>
            <person name="Kanamori-Katayama M."/>
            <person name="Suzuki M."/>
            <person name="Aoki J."/>
            <person name="Arakawa T."/>
            <person name="Iida J."/>
            <person name="Imamura K."/>
            <person name="Itoh M."/>
            <person name="Kato T."/>
            <person name="Kawaji H."/>
            <person name="Kawagashira N."/>
            <person name="Kawashima T."/>
            <person name="Kojima M."/>
            <person name="Kondo S."/>
            <person name="Konno H."/>
            <person name="Nakano K."/>
            <person name="Ninomiya N."/>
            <person name="Nishio T."/>
            <person name="Okada M."/>
            <person name="Plessy C."/>
            <person name="Shibata K."/>
            <person name="Shiraki T."/>
            <person name="Suzuki S."/>
            <person name="Tagami M."/>
            <person name="Waki K."/>
            <person name="Watahiki A."/>
            <person name="Okamura-Oho Y."/>
            <person name="Suzuki H."/>
            <person name="Kawai J."/>
            <person name="Hayashizaki Y."/>
        </authorList>
    </citation>
    <scope>NUCLEOTIDE SEQUENCE [LARGE SCALE MRNA]</scope>
    <source>
        <strain>C57BL/6J</strain>
        <tissue>Amnion</tissue>
    </source>
</reference>
<reference key="3">
    <citation type="journal article" date="2003" name="Genome Res.">
        <title>Analysis of the gene-dense major histocompatibility complex class III region and its comparison to mouse.</title>
        <authorList>
            <person name="Xie T."/>
            <person name="Rowen L."/>
            <person name="Aguado B."/>
            <person name="Ahearn M.E."/>
            <person name="Madan A."/>
            <person name="Qin S."/>
            <person name="Campbell R.D."/>
            <person name="Hood L."/>
        </authorList>
    </citation>
    <scope>NUCLEOTIDE SEQUENCE [LARGE SCALE GENOMIC DNA]</scope>
    <source>
        <strain>129</strain>
    </source>
</reference>
<reference key="4">
    <citation type="journal article" date="2009" name="PLoS Biol.">
        <title>Lineage-specific biology revealed by a finished genome assembly of the mouse.</title>
        <authorList>
            <person name="Church D.M."/>
            <person name="Goodstadt L."/>
            <person name="Hillier L.W."/>
            <person name="Zody M.C."/>
            <person name="Goldstein S."/>
            <person name="She X."/>
            <person name="Bult C.J."/>
            <person name="Agarwala R."/>
            <person name="Cherry J.L."/>
            <person name="DiCuccio M."/>
            <person name="Hlavina W."/>
            <person name="Kapustin Y."/>
            <person name="Meric P."/>
            <person name="Maglott D."/>
            <person name="Birtle Z."/>
            <person name="Marques A.C."/>
            <person name="Graves T."/>
            <person name="Zhou S."/>
            <person name="Teague B."/>
            <person name="Potamousis K."/>
            <person name="Churas C."/>
            <person name="Place M."/>
            <person name="Herschleb J."/>
            <person name="Runnheim R."/>
            <person name="Forrest D."/>
            <person name="Amos-Landgraf J."/>
            <person name="Schwartz D.C."/>
            <person name="Cheng Z."/>
            <person name="Lindblad-Toh K."/>
            <person name="Eichler E.E."/>
            <person name="Ponting C.P."/>
        </authorList>
    </citation>
    <scope>NUCLEOTIDE SEQUENCE [LARGE SCALE GENOMIC DNA]</scope>
    <source>
        <strain>C57BL/6J</strain>
    </source>
</reference>
<reference key="5">
    <citation type="submission" date="2005-09" db="EMBL/GenBank/DDBJ databases">
        <authorList>
            <person name="Mural R.J."/>
            <person name="Adams M.D."/>
            <person name="Myers E.W."/>
            <person name="Smith H.O."/>
            <person name="Venter J.C."/>
        </authorList>
    </citation>
    <scope>NUCLEOTIDE SEQUENCE [LARGE SCALE GENOMIC DNA]</scope>
</reference>
<reference key="6">
    <citation type="journal article" date="2004" name="Genome Res.">
        <title>The status, quality, and expansion of the NIH full-length cDNA project: the Mammalian Gene Collection (MGC).</title>
        <authorList>
            <consortium name="The MGC Project Team"/>
        </authorList>
    </citation>
    <scope>NUCLEOTIDE SEQUENCE [LARGE SCALE MRNA]</scope>
    <source>
        <tissue>Mammary tumor</tissue>
    </source>
</reference>
<reference key="7">
    <citation type="journal article" date="2010" name="Cell">
        <title>A tissue-specific atlas of mouse protein phosphorylation and expression.</title>
        <authorList>
            <person name="Huttlin E.L."/>
            <person name="Jedrychowski M.P."/>
            <person name="Elias J.E."/>
            <person name="Goswami T."/>
            <person name="Rad R."/>
            <person name="Beausoleil S.A."/>
            <person name="Villen J."/>
            <person name="Haas W."/>
            <person name="Sowa M.E."/>
            <person name="Gygi S.P."/>
        </authorList>
    </citation>
    <scope>IDENTIFICATION BY MASS SPECTROMETRY [LARGE SCALE ANALYSIS]</scope>
    <source>
        <tissue>Kidney</tissue>
    </source>
</reference>
<sequence>MAPLLALFYLLQLGPGLAALFCNQNVNITGGNFTLSHGWAPGSLLIYSCPLGRYPSPAWRKCQSNGQWLTPRSSSHHTLRSSRMVKAVCKPVRCLAPSSFENGIYFPRLVSYPVGSNVSFECEQDFTLRGSPVRYCRPNGLWDGETAVCDNGASHCPNPGISVGTARTGLNFDLGDKVRYRCSSSNMVLTGSAERECQSNGVWSGSEPICRQPYSYDFPEDVASALDTSLTNLLGATNPTQNLLTKSLGRKIIIQRSGHLNLYLLLDASQSVTEKDFDIFKKSAELMVERIFSFEVNVSVAIITFASQPKTIMSILSERSQDVTEVITSLDSASYKDHENATGTNTYEVLIRVYSMMQSQMDRLGMETSAWKEIRHTIILLTDGKSNMGDSPKKAVTRIRELLSIEQNRDDYLDIYAIGVGKLDVDWKELNELGSKKDGERHAFILQDAKALQQIFEHMLDVSKLTDTICGVGNMSANASDQERTPWQVTFKPKSKETCQGSLISDQWVLTAAHCFHDIQMEDHHLWRVNVGDPTSQHGKEFLVEDVIIAPGFNVHAKRKQGISEFYADDIALLKLSRKVKMSTHARPICLPCTVGANMALRRSPGSTCKDHETELLSQQKVPAHFVALNGNRLNINLRTGPEWTRCIQAVSQNKNIFPSLTNVSEVVTDQFLCSGMEEEDDNPCKGESGGAVFLGRRYRFFQVGLVSWGLFDPCHGSSNKNLRKKPPRGVLPRDFHISLFRLQPWLRQHLDGVLDFLPL</sequence>
<gene>
    <name evidence="6 8" type="primary">C2</name>
</gene>